<evidence type="ECO:0000255" key="1">
    <source>
        <dbReference type="HAMAP-Rule" id="MF_00605"/>
    </source>
</evidence>
<name>TRMD_SACEN</name>
<comment type="function">
    <text evidence="1">Specifically methylates guanosine-37 in various tRNAs.</text>
</comment>
<comment type="catalytic activity">
    <reaction evidence="1">
        <text>guanosine(37) in tRNA + S-adenosyl-L-methionine = N(1)-methylguanosine(37) in tRNA + S-adenosyl-L-homocysteine + H(+)</text>
        <dbReference type="Rhea" id="RHEA:36899"/>
        <dbReference type="Rhea" id="RHEA-COMP:10145"/>
        <dbReference type="Rhea" id="RHEA-COMP:10147"/>
        <dbReference type="ChEBI" id="CHEBI:15378"/>
        <dbReference type="ChEBI" id="CHEBI:57856"/>
        <dbReference type="ChEBI" id="CHEBI:59789"/>
        <dbReference type="ChEBI" id="CHEBI:73542"/>
        <dbReference type="ChEBI" id="CHEBI:74269"/>
        <dbReference type="EC" id="2.1.1.228"/>
    </reaction>
</comment>
<comment type="subunit">
    <text evidence="1">Homodimer.</text>
</comment>
<comment type="subcellular location">
    <subcellularLocation>
        <location evidence="1">Cytoplasm</location>
    </subcellularLocation>
</comment>
<comment type="similarity">
    <text evidence="1">Belongs to the RNA methyltransferase TrmD family.</text>
</comment>
<sequence length="262" mass="29146">MRIDVITIFPDYLNPLREALLGKAIQRERIAVGVHDLRNWTHDVHRAVDDSPYGGGPGMVMKPDVWGEALDEICGDGTGQVPRLVVPTPAGRPFTQRTAVRWSQEPWLVFACGRYEGIDQRVITDAARRMPVEEVSIGDYVLVGGEVAALTMIEAVVRLLPGVLGNPASAEQDSFSDGLLEGPCYTRPEVWRDQPVPEVLRSGNHAAIARWRRDQSLERTWRRRPELIEALPEGTLDARDREVLDRVRESDHSGDSRSPGSG</sequence>
<accession>A4FME8</accession>
<proteinExistence type="inferred from homology"/>
<reference key="1">
    <citation type="journal article" date="2007" name="Nat. Biotechnol.">
        <title>Complete genome sequence of the erythromycin-producing bacterium Saccharopolyspora erythraea NRRL23338.</title>
        <authorList>
            <person name="Oliynyk M."/>
            <person name="Samborskyy M."/>
            <person name="Lester J.B."/>
            <person name="Mironenko T."/>
            <person name="Scott N."/>
            <person name="Dickens S."/>
            <person name="Haydock S.F."/>
            <person name="Leadlay P.F."/>
        </authorList>
    </citation>
    <scope>NUCLEOTIDE SEQUENCE [LARGE SCALE GENOMIC DNA]</scope>
    <source>
        <strain>ATCC 11635 / DSM 40517 / JCM 4748 / NBRC 13426 / NCIMB 8594 / NRRL 2338</strain>
    </source>
</reference>
<organism>
    <name type="scientific">Saccharopolyspora erythraea (strain ATCC 11635 / DSM 40517 / JCM 4748 / NBRC 13426 / NCIMB 8594 / NRRL 2338)</name>
    <dbReference type="NCBI Taxonomy" id="405948"/>
    <lineage>
        <taxon>Bacteria</taxon>
        <taxon>Bacillati</taxon>
        <taxon>Actinomycetota</taxon>
        <taxon>Actinomycetes</taxon>
        <taxon>Pseudonocardiales</taxon>
        <taxon>Pseudonocardiaceae</taxon>
        <taxon>Saccharopolyspora</taxon>
    </lineage>
</organism>
<keyword id="KW-0963">Cytoplasm</keyword>
<keyword id="KW-0489">Methyltransferase</keyword>
<keyword id="KW-1185">Reference proteome</keyword>
<keyword id="KW-0949">S-adenosyl-L-methionine</keyword>
<keyword id="KW-0808">Transferase</keyword>
<keyword id="KW-0819">tRNA processing</keyword>
<protein>
    <recommendedName>
        <fullName evidence="1">tRNA (guanine-N(1)-)-methyltransferase</fullName>
        <ecNumber evidence="1">2.1.1.228</ecNumber>
    </recommendedName>
    <alternativeName>
        <fullName evidence="1">M1G-methyltransferase</fullName>
    </alternativeName>
    <alternativeName>
        <fullName evidence="1">tRNA [GM37] methyltransferase</fullName>
    </alternativeName>
</protein>
<gene>
    <name evidence="1" type="primary">trmD</name>
    <name type="ordered locus">SACE_6050</name>
</gene>
<dbReference type="EC" id="2.1.1.228" evidence="1"/>
<dbReference type="EMBL" id="AM420293">
    <property type="protein sequence ID" value="CAM05223.1"/>
    <property type="molecule type" value="Genomic_DNA"/>
</dbReference>
<dbReference type="RefSeq" id="WP_009943620.1">
    <property type="nucleotide sequence ID" value="NC_009142.1"/>
</dbReference>
<dbReference type="SMR" id="A4FME8"/>
<dbReference type="STRING" id="405948.SACE_6050"/>
<dbReference type="KEGG" id="sen:SACE_6050"/>
<dbReference type="eggNOG" id="COG0336">
    <property type="taxonomic scope" value="Bacteria"/>
</dbReference>
<dbReference type="HOGENOM" id="CLU_047363_0_0_11"/>
<dbReference type="OrthoDB" id="9807416at2"/>
<dbReference type="Proteomes" id="UP000006728">
    <property type="component" value="Chromosome"/>
</dbReference>
<dbReference type="GO" id="GO:0005829">
    <property type="term" value="C:cytosol"/>
    <property type="evidence" value="ECO:0007669"/>
    <property type="project" value="TreeGrafter"/>
</dbReference>
<dbReference type="GO" id="GO:0052906">
    <property type="term" value="F:tRNA (guanine(37)-N1)-methyltransferase activity"/>
    <property type="evidence" value="ECO:0007669"/>
    <property type="project" value="UniProtKB-UniRule"/>
</dbReference>
<dbReference type="GO" id="GO:0002939">
    <property type="term" value="P:tRNA N1-guanine methylation"/>
    <property type="evidence" value="ECO:0007669"/>
    <property type="project" value="TreeGrafter"/>
</dbReference>
<dbReference type="CDD" id="cd18080">
    <property type="entry name" value="TrmD-like"/>
    <property type="match status" value="1"/>
</dbReference>
<dbReference type="FunFam" id="1.10.1270.20:FF:000001">
    <property type="entry name" value="tRNA (guanine-N(1)-)-methyltransferase"/>
    <property type="match status" value="1"/>
</dbReference>
<dbReference type="FunFam" id="3.40.1280.10:FF:000001">
    <property type="entry name" value="tRNA (guanine-N(1)-)-methyltransferase"/>
    <property type="match status" value="1"/>
</dbReference>
<dbReference type="Gene3D" id="3.40.1280.10">
    <property type="match status" value="1"/>
</dbReference>
<dbReference type="Gene3D" id="1.10.1270.20">
    <property type="entry name" value="tRNA(m1g37)methyltransferase, domain 2"/>
    <property type="match status" value="1"/>
</dbReference>
<dbReference type="HAMAP" id="MF_00605">
    <property type="entry name" value="TrmD"/>
    <property type="match status" value="1"/>
</dbReference>
<dbReference type="InterPro" id="IPR029028">
    <property type="entry name" value="Alpha/beta_knot_MTases"/>
</dbReference>
<dbReference type="InterPro" id="IPR023148">
    <property type="entry name" value="tRNA_m1G_MeTrfase_C_sf"/>
</dbReference>
<dbReference type="InterPro" id="IPR002649">
    <property type="entry name" value="tRNA_m1G_MeTrfase_TrmD"/>
</dbReference>
<dbReference type="InterPro" id="IPR029026">
    <property type="entry name" value="tRNA_m1G_MTases_N"/>
</dbReference>
<dbReference type="InterPro" id="IPR016009">
    <property type="entry name" value="tRNA_MeTrfase_TRMD/TRM10"/>
</dbReference>
<dbReference type="NCBIfam" id="NF000648">
    <property type="entry name" value="PRK00026.1"/>
    <property type="match status" value="1"/>
</dbReference>
<dbReference type="NCBIfam" id="TIGR00088">
    <property type="entry name" value="trmD"/>
    <property type="match status" value="1"/>
</dbReference>
<dbReference type="PANTHER" id="PTHR46417">
    <property type="entry name" value="TRNA (GUANINE-N(1)-)-METHYLTRANSFERASE"/>
    <property type="match status" value="1"/>
</dbReference>
<dbReference type="PANTHER" id="PTHR46417:SF1">
    <property type="entry name" value="TRNA (GUANINE-N(1)-)-METHYLTRANSFERASE"/>
    <property type="match status" value="1"/>
</dbReference>
<dbReference type="Pfam" id="PF01746">
    <property type="entry name" value="tRNA_m1G_MT"/>
    <property type="match status" value="1"/>
</dbReference>
<dbReference type="PIRSF" id="PIRSF000386">
    <property type="entry name" value="tRNA_mtase"/>
    <property type="match status" value="1"/>
</dbReference>
<dbReference type="SUPFAM" id="SSF75217">
    <property type="entry name" value="alpha/beta knot"/>
    <property type="match status" value="1"/>
</dbReference>
<feature type="chain" id="PRO_1000006511" description="tRNA (guanine-N(1)-)-methyltransferase">
    <location>
        <begin position="1"/>
        <end position="262"/>
    </location>
</feature>
<feature type="binding site" evidence="1">
    <location>
        <position position="113"/>
    </location>
    <ligand>
        <name>S-adenosyl-L-methionine</name>
        <dbReference type="ChEBI" id="CHEBI:59789"/>
    </ligand>
</feature>
<feature type="binding site" evidence="1">
    <location>
        <begin position="137"/>
        <end position="142"/>
    </location>
    <ligand>
        <name>S-adenosyl-L-methionine</name>
        <dbReference type="ChEBI" id="CHEBI:59789"/>
    </ligand>
</feature>